<evidence type="ECO:0000255" key="1">
    <source>
        <dbReference type="HAMAP-Rule" id="MF_00068"/>
    </source>
</evidence>
<comment type="function">
    <text evidence="1">Specifically catalyzes the cleavage of the D-lactyl ether substituent of MurNAc 6-phosphate, producing GlcNAc 6-phosphate and D-lactate. Together with AnmK, is also required for the utilization of anhydro-N-acetylmuramic acid (anhMurNAc) either imported from the medium or derived from its own cell wall murein, and thus plays a role in cell wall recycling.</text>
</comment>
<comment type="catalytic activity">
    <reaction evidence="1">
        <text>N-acetyl-D-muramate 6-phosphate + H2O = N-acetyl-D-glucosamine 6-phosphate + (R)-lactate</text>
        <dbReference type="Rhea" id="RHEA:26410"/>
        <dbReference type="ChEBI" id="CHEBI:15377"/>
        <dbReference type="ChEBI" id="CHEBI:16004"/>
        <dbReference type="ChEBI" id="CHEBI:57513"/>
        <dbReference type="ChEBI" id="CHEBI:58722"/>
        <dbReference type="EC" id="4.2.1.126"/>
    </reaction>
</comment>
<comment type="pathway">
    <text evidence="1">Amino-sugar metabolism; 1,6-anhydro-N-acetylmuramate degradation.</text>
</comment>
<comment type="pathway">
    <text evidence="1">Amino-sugar metabolism; N-acetylmuramate degradation.</text>
</comment>
<comment type="pathway">
    <text evidence="1">Cell wall biogenesis; peptidoglycan recycling.</text>
</comment>
<comment type="subunit">
    <text evidence="1">Homodimer.</text>
</comment>
<comment type="induction">
    <text evidence="1">Induced by MurNAc 6-phosphate that releases the repressor MurR from the DNA. Repressed by MurR in the absence of MurNAc 6-phosphate.</text>
</comment>
<comment type="miscellaneous">
    <text evidence="1">A lyase-type mechanism (elimination/hydration) is suggested for the cleavage of the lactyl ether bond of MurNAc 6-phosphate, with the formation of an alpha,beta-unsaturated aldehyde intermediate with (E)-stereochemistry, followed by the syn addition of water to give product.</text>
</comment>
<comment type="similarity">
    <text evidence="1">Belongs to the GCKR-like family. MurNAc-6-P etherase subfamily.</text>
</comment>
<sequence>MNLGTLVSETRNPQTMDLDALPTPELVKRFNEQDTLVAEAVKATLPDVARAVDAAAAALKSGGRIIYMGAGTSGRLGVLDASECPPTFGVPHGLVVGLIAGGPGALLKAVEGAEDSQQAGEDDLVALNLQEQDLVVGLAASGRTPYVIGGLRYARQSGCTTVAVSCNPDSPIAREANIAISPVVGPEALTGSTRLKSGTAQKMVLNMISTGAMVKFGKVYQNLMVDMKATNVKLVDRACRMVVEATGIGREEAEALLKQTDFEVKPAILMALTGLDAAAAREKLAAHQGFLRAALEH</sequence>
<accession>Q5PII8</accession>
<name>MURQ_SALPA</name>
<reference key="1">
    <citation type="journal article" date="2004" name="Nat. Genet.">
        <title>Comparison of genome degradation in Paratyphi A and Typhi, human-restricted serovars of Salmonella enterica that cause typhoid.</title>
        <authorList>
            <person name="McClelland M."/>
            <person name="Sanderson K.E."/>
            <person name="Clifton S.W."/>
            <person name="Latreille P."/>
            <person name="Porwollik S."/>
            <person name="Sabo A."/>
            <person name="Meyer R."/>
            <person name="Bieri T."/>
            <person name="Ozersky P."/>
            <person name="McLellan M."/>
            <person name="Harkins C.R."/>
            <person name="Wang C."/>
            <person name="Nguyen C."/>
            <person name="Berghoff A."/>
            <person name="Elliott G."/>
            <person name="Kohlberg S."/>
            <person name="Strong C."/>
            <person name="Du F."/>
            <person name="Carter J."/>
            <person name="Kremizki C."/>
            <person name="Layman D."/>
            <person name="Leonard S."/>
            <person name="Sun H."/>
            <person name="Fulton L."/>
            <person name="Nash W."/>
            <person name="Miner T."/>
            <person name="Minx P."/>
            <person name="Delehaunty K."/>
            <person name="Fronick C."/>
            <person name="Magrini V."/>
            <person name="Nhan M."/>
            <person name="Warren W."/>
            <person name="Florea L."/>
            <person name="Spieth J."/>
            <person name="Wilson R.K."/>
        </authorList>
    </citation>
    <scope>NUCLEOTIDE SEQUENCE [LARGE SCALE GENOMIC DNA]</scope>
    <source>
        <strain>ATCC 9150 / SARB42</strain>
    </source>
</reference>
<protein>
    <recommendedName>
        <fullName evidence="1">N-acetylmuramic acid 6-phosphate etherase</fullName>
        <shortName evidence="1">MurNAc-6-P etherase</shortName>
        <ecNumber evidence="1">4.2.1.126</ecNumber>
    </recommendedName>
    <alternativeName>
        <fullName evidence="1">N-acetylmuramic acid 6-phosphate hydrolase</fullName>
    </alternativeName>
    <alternativeName>
        <fullName evidence="1">N-acetylmuramic acid 6-phosphate lyase</fullName>
    </alternativeName>
</protein>
<dbReference type="EC" id="4.2.1.126" evidence="1"/>
<dbReference type="EMBL" id="CP000026">
    <property type="protein sequence ID" value="AAV76316.1"/>
    <property type="molecule type" value="Genomic_DNA"/>
</dbReference>
<dbReference type="RefSeq" id="WP_001048530.1">
    <property type="nucleotide sequence ID" value="NC_006511.1"/>
</dbReference>
<dbReference type="SMR" id="Q5PII8"/>
<dbReference type="KEGG" id="spt:SPA0294"/>
<dbReference type="HOGENOM" id="CLU_049049_1_1_6"/>
<dbReference type="UniPathway" id="UPA00342"/>
<dbReference type="UniPathway" id="UPA00343"/>
<dbReference type="UniPathway" id="UPA00544"/>
<dbReference type="Proteomes" id="UP000008185">
    <property type="component" value="Chromosome"/>
</dbReference>
<dbReference type="GO" id="GO:0097367">
    <property type="term" value="F:carbohydrate derivative binding"/>
    <property type="evidence" value="ECO:0007669"/>
    <property type="project" value="InterPro"/>
</dbReference>
<dbReference type="GO" id="GO:0016835">
    <property type="term" value="F:carbon-oxygen lyase activity"/>
    <property type="evidence" value="ECO:0007669"/>
    <property type="project" value="UniProtKB-UniRule"/>
</dbReference>
<dbReference type="GO" id="GO:0016803">
    <property type="term" value="F:ether hydrolase activity"/>
    <property type="evidence" value="ECO:0007669"/>
    <property type="project" value="TreeGrafter"/>
</dbReference>
<dbReference type="GO" id="GO:0097175">
    <property type="term" value="P:1,6-anhydro-N-acetyl-beta-muramic acid catabolic process"/>
    <property type="evidence" value="ECO:0007669"/>
    <property type="project" value="UniProtKB-UniRule"/>
</dbReference>
<dbReference type="GO" id="GO:0046348">
    <property type="term" value="P:amino sugar catabolic process"/>
    <property type="evidence" value="ECO:0007669"/>
    <property type="project" value="InterPro"/>
</dbReference>
<dbReference type="GO" id="GO:0097173">
    <property type="term" value="P:N-acetylmuramic acid catabolic process"/>
    <property type="evidence" value="ECO:0007669"/>
    <property type="project" value="UniProtKB-UniPathway"/>
</dbReference>
<dbReference type="GO" id="GO:0009254">
    <property type="term" value="P:peptidoglycan turnover"/>
    <property type="evidence" value="ECO:0007669"/>
    <property type="project" value="UniProtKB-UniRule"/>
</dbReference>
<dbReference type="CDD" id="cd05007">
    <property type="entry name" value="SIS_Etherase"/>
    <property type="match status" value="1"/>
</dbReference>
<dbReference type="FunFam" id="1.10.8.1080:FF:000001">
    <property type="entry name" value="N-acetylmuramic acid 6-phosphate etherase"/>
    <property type="match status" value="1"/>
</dbReference>
<dbReference type="FunFam" id="3.40.50.10490:FF:000014">
    <property type="entry name" value="N-acetylmuramic acid 6-phosphate etherase"/>
    <property type="match status" value="1"/>
</dbReference>
<dbReference type="Gene3D" id="1.10.8.1080">
    <property type="match status" value="1"/>
</dbReference>
<dbReference type="Gene3D" id="3.40.50.10490">
    <property type="entry name" value="Glucose-6-phosphate isomerase like protein, domain 1"/>
    <property type="match status" value="1"/>
</dbReference>
<dbReference type="HAMAP" id="MF_00068">
    <property type="entry name" value="MurQ"/>
    <property type="match status" value="1"/>
</dbReference>
<dbReference type="InterPro" id="IPR005488">
    <property type="entry name" value="Etherase_MurQ"/>
</dbReference>
<dbReference type="InterPro" id="IPR005486">
    <property type="entry name" value="Glucokinase_regulatory_CS"/>
</dbReference>
<dbReference type="InterPro" id="IPR040190">
    <property type="entry name" value="MURQ/GCKR"/>
</dbReference>
<dbReference type="InterPro" id="IPR001347">
    <property type="entry name" value="SIS_dom"/>
</dbReference>
<dbReference type="InterPro" id="IPR046348">
    <property type="entry name" value="SIS_dom_sf"/>
</dbReference>
<dbReference type="NCBIfam" id="TIGR00274">
    <property type="entry name" value="N-acetylmuramic acid 6-phosphate etherase"/>
    <property type="match status" value="1"/>
</dbReference>
<dbReference type="NCBIfam" id="NF003915">
    <property type="entry name" value="PRK05441.1"/>
    <property type="match status" value="1"/>
</dbReference>
<dbReference type="NCBIfam" id="NF009222">
    <property type="entry name" value="PRK12570.1"/>
    <property type="match status" value="1"/>
</dbReference>
<dbReference type="PANTHER" id="PTHR10088">
    <property type="entry name" value="GLUCOKINASE REGULATORY PROTEIN"/>
    <property type="match status" value="1"/>
</dbReference>
<dbReference type="PANTHER" id="PTHR10088:SF5">
    <property type="entry name" value="N-ACETYLMURAMIC ACID 6-PHOSPHATE ETHERASE"/>
    <property type="match status" value="1"/>
</dbReference>
<dbReference type="Pfam" id="PF22645">
    <property type="entry name" value="GKRP_SIS_N"/>
    <property type="match status" value="1"/>
</dbReference>
<dbReference type="SUPFAM" id="SSF53697">
    <property type="entry name" value="SIS domain"/>
    <property type="match status" value="1"/>
</dbReference>
<dbReference type="PROSITE" id="PS01272">
    <property type="entry name" value="GCKR"/>
    <property type="match status" value="1"/>
</dbReference>
<dbReference type="PROSITE" id="PS51464">
    <property type="entry name" value="SIS"/>
    <property type="match status" value="1"/>
</dbReference>
<feature type="chain" id="PRO_0000249649" description="N-acetylmuramic acid 6-phosphate etherase">
    <location>
        <begin position="1"/>
        <end position="297"/>
    </location>
</feature>
<feature type="domain" description="SIS" evidence="1">
    <location>
        <begin position="55"/>
        <end position="218"/>
    </location>
</feature>
<feature type="active site" description="Proton donor" evidence="1">
    <location>
        <position position="83"/>
    </location>
</feature>
<feature type="active site" evidence="1">
    <location>
        <position position="114"/>
    </location>
</feature>
<proteinExistence type="inferred from homology"/>
<organism>
    <name type="scientific">Salmonella paratyphi A (strain ATCC 9150 / SARB42)</name>
    <dbReference type="NCBI Taxonomy" id="295319"/>
    <lineage>
        <taxon>Bacteria</taxon>
        <taxon>Pseudomonadati</taxon>
        <taxon>Pseudomonadota</taxon>
        <taxon>Gammaproteobacteria</taxon>
        <taxon>Enterobacterales</taxon>
        <taxon>Enterobacteriaceae</taxon>
        <taxon>Salmonella</taxon>
    </lineage>
</organism>
<gene>
    <name evidence="1" type="primary">murQ</name>
    <name type="ordered locus">SPA0294</name>
</gene>
<keyword id="KW-0119">Carbohydrate metabolism</keyword>
<keyword id="KW-0456">Lyase</keyword>